<dbReference type="EC" id="3.1.26.11" evidence="1"/>
<dbReference type="EMBL" id="AJ248286">
    <property type="protein sequence ID" value="CAB50012.1"/>
    <property type="molecule type" value="Genomic_DNA"/>
</dbReference>
<dbReference type="EMBL" id="HE613800">
    <property type="protein sequence ID" value="CCE70514.1"/>
    <property type="molecule type" value="Genomic_DNA"/>
</dbReference>
<dbReference type="PIR" id="G75088">
    <property type="entry name" value="G75088"/>
</dbReference>
<dbReference type="RefSeq" id="WP_010868219.1">
    <property type="nucleotide sequence ID" value="NC_000868.1"/>
</dbReference>
<dbReference type="SMR" id="Q9UZP4"/>
<dbReference type="STRING" id="272844.PAB0728"/>
<dbReference type="KEGG" id="pab:PAB0728"/>
<dbReference type="PATRIC" id="fig|272844.11.peg.1157"/>
<dbReference type="eggNOG" id="arCOG00501">
    <property type="taxonomic scope" value="Archaea"/>
</dbReference>
<dbReference type="HOGENOM" id="CLU_031317_2_1_2"/>
<dbReference type="OrthoDB" id="85118at2157"/>
<dbReference type="PhylomeDB" id="Q9UZP4"/>
<dbReference type="Proteomes" id="UP000000810">
    <property type="component" value="Chromosome"/>
</dbReference>
<dbReference type="Proteomes" id="UP000009139">
    <property type="component" value="Chromosome"/>
</dbReference>
<dbReference type="GO" id="GO:0042781">
    <property type="term" value="F:3'-tRNA processing endoribonuclease activity"/>
    <property type="evidence" value="ECO:0007669"/>
    <property type="project" value="UniProtKB-UniRule"/>
</dbReference>
<dbReference type="GO" id="GO:0008270">
    <property type="term" value="F:zinc ion binding"/>
    <property type="evidence" value="ECO:0007669"/>
    <property type="project" value="UniProtKB-UniRule"/>
</dbReference>
<dbReference type="CDD" id="cd07717">
    <property type="entry name" value="RNaseZ_ZiPD-like_MBL-fold"/>
    <property type="match status" value="1"/>
</dbReference>
<dbReference type="Gene3D" id="3.60.15.10">
    <property type="entry name" value="Ribonuclease Z/Hydroxyacylglutathione hydrolase-like"/>
    <property type="match status" value="1"/>
</dbReference>
<dbReference type="HAMAP" id="MF_01818">
    <property type="entry name" value="RNase_Z_BN"/>
    <property type="match status" value="1"/>
</dbReference>
<dbReference type="InterPro" id="IPR001279">
    <property type="entry name" value="Metallo-B-lactamas"/>
</dbReference>
<dbReference type="InterPro" id="IPR036866">
    <property type="entry name" value="RibonucZ/Hydroxyglut_hydro"/>
</dbReference>
<dbReference type="InterPro" id="IPR013471">
    <property type="entry name" value="RNase_Z/BN"/>
</dbReference>
<dbReference type="NCBIfam" id="NF000801">
    <property type="entry name" value="PRK00055.1-3"/>
    <property type="match status" value="1"/>
</dbReference>
<dbReference type="NCBIfam" id="TIGR02651">
    <property type="entry name" value="RNase_Z"/>
    <property type="match status" value="1"/>
</dbReference>
<dbReference type="PANTHER" id="PTHR46018">
    <property type="entry name" value="ZINC PHOSPHODIESTERASE ELAC PROTEIN 1"/>
    <property type="match status" value="1"/>
</dbReference>
<dbReference type="PANTHER" id="PTHR46018:SF2">
    <property type="entry name" value="ZINC PHOSPHODIESTERASE ELAC PROTEIN 1"/>
    <property type="match status" value="1"/>
</dbReference>
<dbReference type="Pfam" id="PF00753">
    <property type="entry name" value="Lactamase_B"/>
    <property type="match status" value="1"/>
</dbReference>
<dbReference type="SMART" id="SM00849">
    <property type="entry name" value="Lactamase_B"/>
    <property type="match status" value="1"/>
</dbReference>
<dbReference type="SUPFAM" id="SSF56281">
    <property type="entry name" value="Metallo-hydrolase/oxidoreductase"/>
    <property type="match status" value="1"/>
</dbReference>
<gene>
    <name evidence="1" type="primary">rnz</name>
    <name type="ordered locus">PYRAB11010</name>
    <name type="ORF">PAB0728</name>
</gene>
<evidence type="ECO:0000255" key="1">
    <source>
        <dbReference type="HAMAP-Rule" id="MF_01818"/>
    </source>
</evidence>
<sequence length="307" mass="35131">MIEVIFLGTGGIKPTPERNVPSIAIKVEGELILFDVGEGTLRQMEIAGLSPMKIRRIFITHFHGDHYLGLPALIQTMNLWKRKEPLHIYGPENSIEFIKNLLNSGYFAPSFDVTVHELPGKARLQFEKYEVWAFEVSHGVPALGYVFKEKDRRGSFDLEKIKNLGLEPGPWMKELEEKKVINIGGRTIRLSEVTGPKKRGAKIVYTGDTEPCENVIQFSRRANLLIHEATYLNSEDRGESYHTTVEEACEIWKKSKAFNLALFHRGPRYSFKEYKEGATKLCPQAMIPRDFDRIMVKGAEYVIFKVR</sequence>
<organism>
    <name type="scientific">Pyrococcus abyssi (strain GE5 / Orsay)</name>
    <dbReference type="NCBI Taxonomy" id="272844"/>
    <lineage>
        <taxon>Archaea</taxon>
        <taxon>Methanobacteriati</taxon>
        <taxon>Methanobacteriota</taxon>
        <taxon>Thermococci</taxon>
        <taxon>Thermococcales</taxon>
        <taxon>Thermococcaceae</taxon>
        <taxon>Pyrococcus</taxon>
    </lineage>
</organism>
<reference key="1">
    <citation type="journal article" date="2003" name="Mol. Microbiol.">
        <title>An integrated analysis of the genome of the hyperthermophilic archaeon Pyrococcus abyssi.</title>
        <authorList>
            <person name="Cohen G.N."/>
            <person name="Barbe V."/>
            <person name="Flament D."/>
            <person name="Galperin M."/>
            <person name="Heilig R."/>
            <person name="Lecompte O."/>
            <person name="Poch O."/>
            <person name="Prieur D."/>
            <person name="Querellou J."/>
            <person name="Ripp R."/>
            <person name="Thierry J.-C."/>
            <person name="Van der Oost J."/>
            <person name="Weissenbach J."/>
            <person name="Zivanovic Y."/>
            <person name="Forterre P."/>
        </authorList>
    </citation>
    <scope>NUCLEOTIDE SEQUENCE [LARGE SCALE GENOMIC DNA]</scope>
    <source>
        <strain>GE5 / Orsay</strain>
    </source>
</reference>
<reference key="2">
    <citation type="journal article" date="2012" name="Curr. Microbiol.">
        <title>Re-annotation of two hyperthermophilic archaea Pyrococcus abyssi GE5 and Pyrococcus furiosus DSM 3638.</title>
        <authorList>
            <person name="Gao J."/>
            <person name="Wang J."/>
        </authorList>
    </citation>
    <scope>GENOME REANNOTATION</scope>
    <source>
        <strain>GE5 / Orsay</strain>
    </source>
</reference>
<name>RNZ_PYRAB</name>
<proteinExistence type="inferred from homology"/>
<feature type="chain" id="PRO_0000155931" description="Ribonuclease Z">
    <location>
        <begin position="1"/>
        <end position="307"/>
    </location>
</feature>
<feature type="active site" description="Proton acceptor" evidence="1">
    <location>
        <position position="65"/>
    </location>
</feature>
<feature type="binding site" evidence="1">
    <location>
        <position position="61"/>
    </location>
    <ligand>
        <name>Zn(2+)</name>
        <dbReference type="ChEBI" id="CHEBI:29105"/>
        <label>1</label>
        <note>catalytic</note>
    </ligand>
</feature>
<feature type="binding site" evidence="1">
    <location>
        <position position="63"/>
    </location>
    <ligand>
        <name>Zn(2+)</name>
        <dbReference type="ChEBI" id="CHEBI:29105"/>
        <label>1</label>
        <note>catalytic</note>
    </ligand>
</feature>
<feature type="binding site" evidence="1">
    <location>
        <position position="65"/>
    </location>
    <ligand>
        <name>Zn(2+)</name>
        <dbReference type="ChEBI" id="CHEBI:29105"/>
        <label>2</label>
        <note>catalytic</note>
    </ligand>
</feature>
<feature type="binding site" evidence="1">
    <location>
        <position position="66"/>
    </location>
    <ligand>
        <name>Zn(2+)</name>
        <dbReference type="ChEBI" id="CHEBI:29105"/>
        <label>2</label>
        <note>catalytic</note>
    </ligand>
</feature>
<feature type="binding site" evidence="1">
    <location>
        <position position="138"/>
    </location>
    <ligand>
        <name>Zn(2+)</name>
        <dbReference type="ChEBI" id="CHEBI:29105"/>
        <label>1</label>
        <note>catalytic</note>
    </ligand>
</feature>
<feature type="binding site" evidence="1">
    <location>
        <position position="208"/>
    </location>
    <ligand>
        <name>Zn(2+)</name>
        <dbReference type="ChEBI" id="CHEBI:29105"/>
        <label>1</label>
        <note>catalytic</note>
    </ligand>
</feature>
<feature type="binding site" evidence="1">
    <location>
        <position position="208"/>
    </location>
    <ligand>
        <name>Zn(2+)</name>
        <dbReference type="ChEBI" id="CHEBI:29105"/>
        <label>2</label>
        <note>catalytic</note>
    </ligand>
</feature>
<feature type="binding site" evidence="1">
    <location>
        <position position="264"/>
    </location>
    <ligand>
        <name>Zn(2+)</name>
        <dbReference type="ChEBI" id="CHEBI:29105"/>
        <label>2</label>
        <note>catalytic</note>
    </ligand>
</feature>
<protein>
    <recommendedName>
        <fullName evidence="1">Ribonuclease Z</fullName>
        <shortName evidence="1">RNase Z</shortName>
        <ecNumber evidence="1">3.1.26.11</ecNumber>
    </recommendedName>
    <alternativeName>
        <fullName evidence="1">tRNA 3 endonuclease</fullName>
    </alternativeName>
    <alternativeName>
        <fullName evidence="1">tRNase Z</fullName>
    </alternativeName>
</protein>
<comment type="function">
    <text evidence="1">Zinc phosphodiesterase, which displays some tRNA 3'-processing endonuclease activity. Probably involved in tRNA maturation, by removing a 3'-trailer from precursor tRNA.</text>
</comment>
<comment type="catalytic activity">
    <reaction evidence="1">
        <text>Endonucleolytic cleavage of RNA, removing extra 3' nucleotides from tRNA precursor, generating 3' termini of tRNAs. A 3'-hydroxy group is left at the tRNA terminus and a 5'-phosphoryl group is left at the trailer molecule.</text>
        <dbReference type="EC" id="3.1.26.11"/>
    </reaction>
</comment>
<comment type="cofactor">
    <cofactor evidence="1">
        <name>Zn(2+)</name>
        <dbReference type="ChEBI" id="CHEBI:29105"/>
    </cofactor>
    <text evidence="1">Binds 2 Zn(2+) ions.</text>
</comment>
<comment type="subunit">
    <text evidence="1">Homodimer.</text>
</comment>
<comment type="similarity">
    <text evidence="1">Belongs to the RNase Z family.</text>
</comment>
<accession>Q9UZP4</accession>
<accession>G8ZJQ5</accession>
<keyword id="KW-0255">Endonuclease</keyword>
<keyword id="KW-0378">Hydrolase</keyword>
<keyword id="KW-0479">Metal-binding</keyword>
<keyword id="KW-0540">Nuclease</keyword>
<keyword id="KW-0819">tRNA processing</keyword>
<keyword id="KW-0862">Zinc</keyword>